<organism>
    <name type="scientific">Saccharolobus islandicus (strain M.14.25 / Kamchatka #1)</name>
    <name type="common">Sulfolobus islandicus</name>
    <dbReference type="NCBI Taxonomy" id="427317"/>
    <lineage>
        <taxon>Archaea</taxon>
        <taxon>Thermoproteota</taxon>
        <taxon>Thermoprotei</taxon>
        <taxon>Sulfolobales</taxon>
        <taxon>Sulfolobaceae</taxon>
        <taxon>Saccharolobus</taxon>
    </lineage>
</organism>
<name>CCA_SACI4</name>
<reference key="1">
    <citation type="journal article" date="2009" name="Proc. Natl. Acad. Sci. U.S.A.">
        <title>Biogeography of the Sulfolobus islandicus pan-genome.</title>
        <authorList>
            <person name="Reno M.L."/>
            <person name="Held N.L."/>
            <person name="Fields C.J."/>
            <person name="Burke P.V."/>
            <person name="Whitaker R.J."/>
        </authorList>
    </citation>
    <scope>NUCLEOTIDE SEQUENCE [LARGE SCALE GENOMIC DNA]</scope>
    <source>
        <strain>M.14.25 / Kamchatka #1</strain>
    </source>
</reference>
<feature type="chain" id="PRO_1000214143" description="CCA-adding enzyme">
    <location>
        <begin position="1"/>
        <end position="412"/>
    </location>
</feature>
<feature type="binding site" evidence="1">
    <location>
        <position position="41"/>
    </location>
    <ligand>
        <name>ATP</name>
        <dbReference type="ChEBI" id="CHEBI:30616"/>
    </ligand>
</feature>
<feature type="binding site" evidence="1">
    <location>
        <position position="41"/>
    </location>
    <ligand>
        <name>CTP</name>
        <dbReference type="ChEBI" id="CHEBI:37563"/>
    </ligand>
</feature>
<feature type="binding site" evidence="1">
    <location>
        <position position="44"/>
    </location>
    <ligand>
        <name>ATP</name>
        <dbReference type="ChEBI" id="CHEBI:30616"/>
    </ligand>
</feature>
<feature type="binding site" evidence="1">
    <location>
        <position position="44"/>
    </location>
    <ligand>
        <name>CTP</name>
        <dbReference type="ChEBI" id="CHEBI:37563"/>
    </ligand>
</feature>
<feature type="binding site" evidence="1">
    <location>
        <position position="53"/>
    </location>
    <ligand>
        <name>Mg(2+)</name>
        <dbReference type="ChEBI" id="CHEBI:18420"/>
    </ligand>
</feature>
<feature type="binding site" evidence="1">
    <location>
        <position position="55"/>
    </location>
    <ligand>
        <name>Mg(2+)</name>
        <dbReference type="ChEBI" id="CHEBI:18420"/>
    </ligand>
</feature>
<feature type="binding site" evidence="1">
    <location>
        <position position="106"/>
    </location>
    <ligand>
        <name>Mg(2+)</name>
        <dbReference type="ChEBI" id="CHEBI:18420"/>
    </ligand>
</feature>
<feature type="binding site" evidence="1">
    <location>
        <position position="129"/>
    </location>
    <ligand>
        <name>ATP</name>
        <dbReference type="ChEBI" id="CHEBI:30616"/>
    </ligand>
</feature>
<feature type="binding site" evidence="1">
    <location>
        <position position="129"/>
    </location>
    <ligand>
        <name>CTP</name>
        <dbReference type="ChEBI" id="CHEBI:37563"/>
    </ligand>
</feature>
<feature type="binding site" evidence="1">
    <location>
        <position position="149"/>
    </location>
    <ligand>
        <name>ATP</name>
        <dbReference type="ChEBI" id="CHEBI:30616"/>
    </ligand>
</feature>
<feature type="binding site" evidence="1">
    <location>
        <position position="149"/>
    </location>
    <ligand>
        <name>CTP</name>
        <dbReference type="ChEBI" id="CHEBI:37563"/>
    </ligand>
</feature>
<feature type="binding site" evidence="1">
    <location>
        <position position="158"/>
    </location>
    <ligand>
        <name>ATP</name>
        <dbReference type="ChEBI" id="CHEBI:30616"/>
    </ligand>
</feature>
<feature type="binding site" evidence="1">
    <location>
        <position position="158"/>
    </location>
    <ligand>
        <name>CTP</name>
        <dbReference type="ChEBI" id="CHEBI:37563"/>
    </ligand>
</feature>
<accession>C3MYG4</accession>
<comment type="function">
    <text evidence="1">Catalyzes the addition and repair of the essential 3'-terminal CCA sequence in tRNAs without using a nucleic acid template. Adds these three nucleotides in the order of C, C, and A to the tRNA nucleotide-73, using CTP and ATP as substrates and producing inorganic pyrophosphate. tRNA 3'-terminal CCA addition is required both for tRNA processing and repair. Also involved in tRNA surveillance by mediating tandem CCA addition to generate a CCACCA at the 3' terminus of unstable tRNAs. While stable tRNAs receive only 3'-terminal CCA, unstable tRNAs are marked with CCACCA and rapidly degraded.</text>
</comment>
<comment type="catalytic activity">
    <reaction evidence="1">
        <text>a tRNA precursor + 2 CTP + ATP = a tRNA with a 3' CCA end + 3 diphosphate</text>
        <dbReference type="Rhea" id="RHEA:14433"/>
        <dbReference type="Rhea" id="RHEA-COMP:10465"/>
        <dbReference type="Rhea" id="RHEA-COMP:10468"/>
        <dbReference type="ChEBI" id="CHEBI:30616"/>
        <dbReference type="ChEBI" id="CHEBI:33019"/>
        <dbReference type="ChEBI" id="CHEBI:37563"/>
        <dbReference type="ChEBI" id="CHEBI:74896"/>
        <dbReference type="ChEBI" id="CHEBI:83071"/>
        <dbReference type="EC" id="2.7.7.72"/>
    </reaction>
</comment>
<comment type="catalytic activity">
    <reaction evidence="1">
        <text>a tRNA with a 3' CCA end + 2 CTP + ATP = a tRNA with a 3' CCACCA end + 3 diphosphate</text>
        <dbReference type="Rhea" id="RHEA:76235"/>
        <dbReference type="Rhea" id="RHEA-COMP:10468"/>
        <dbReference type="Rhea" id="RHEA-COMP:18655"/>
        <dbReference type="ChEBI" id="CHEBI:30616"/>
        <dbReference type="ChEBI" id="CHEBI:33019"/>
        <dbReference type="ChEBI" id="CHEBI:37563"/>
        <dbReference type="ChEBI" id="CHEBI:83071"/>
        <dbReference type="ChEBI" id="CHEBI:195187"/>
    </reaction>
    <physiologicalReaction direction="left-to-right" evidence="1">
        <dbReference type="Rhea" id="RHEA:76236"/>
    </physiologicalReaction>
</comment>
<comment type="cofactor">
    <cofactor evidence="1">
        <name>Mg(2+)</name>
        <dbReference type="ChEBI" id="CHEBI:18420"/>
    </cofactor>
</comment>
<comment type="subunit">
    <text evidence="1">Homodimer.</text>
</comment>
<comment type="miscellaneous">
    <text evidence="1">A single active site specifically recognizes both ATP and CTP and is responsible for their addition.</text>
</comment>
<comment type="similarity">
    <text evidence="1">Belongs to the tRNA nucleotidyltransferase/poly(A) polymerase family. Archaeal CCA-adding enzyme subfamily.</text>
</comment>
<gene>
    <name evidence="1" type="primary">cca</name>
    <name type="ordered locus">M1425_1182</name>
</gene>
<dbReference type="EC" id="2.7.7.72" evidence="1"/>
<dbReference type="EMBL" id="CP001400">
    <property type="protein sequence ID" value="ACP37943.1"/>
    <property type="molecule type" value="Genomic_DNA"/>
</dbReference>
<dbReference type="RefSeq" id="WP_012711203.1">
    <property type="nucleotide sequence ID" value="NC_012588.1"/>
</dbReference>
<dbReference type="SMR" id="C3MYG4"/>
<dbReference type="GeneID" id="84055702"/>
<dbReference type="KEGG" id="sia:M1425_1182"/>
<dbReference type="HOGENOM" id="CLU_044679_1_0_2"/>
<dbReference type="Proteomes" id="UP000001350">
    <property type="component" value="Chromosome"/>
</dbReference>
<dbReference type="GO" id="GO:0005524">
    <property type="term" value="F:ATP binding"/>
    <property type="evidence" value="ECO:0007669"/>
    <property type="project" value="UniProtKB-UniRule"/>
</dbReference>
<dbReference type="GO" id="GO:0004810">
    <property type="term" value="F:CCA tRNA nucleotidyltransferase activity"/>
    <property type="evidence" value="ECO:0007669"/>
    <property type="project" value="UniProtKB-UniRule"/>
</dbReference>
<dbReference type="GO" id="GO:0000287">
    <property type="term" value="F:magnesium ion binding"/>
    <property type="evidence" value="ECO:0007669"/>
    <property type="project" value="UniProtKB-UniRule"/>
</dbReference>
<dbReference type="GO" id="GO:0000049">
    <property type="term" value="F:tRNA binding"/>
    <property type="evidence" value="ECO:0007669"/>
    <property type="project" value="UniProtKB-UniRule"/>
</dbReference>
<dbReference type="GO" id="GO:0042245">
    <property type="term" value="P:RNA repair"/>
    <property type="evidence" value="ECO:0007669"/>
    <property type="project" value="UniProtKB-KW"/>
</dbReference>
<dbReference type="GO" id="GO:0001680">
    <property type="term" value="P:tRNA 3'-terminal CCA addition"/>
    <property type="evidence" value="ECO:0007669"/>
    <property type="project" value="UniProtKB-UniRule"/>
</dbReference>
<dbReference type="CDD" id="cd05400">
    <property type="entry name" value="NT_2-5OAS_ClassI-CCAase"/>
    <property type="match status" value="1"/>
</dbReference>
<dbReference type="Gene3D" id="3.30.460.10">
    <property type="entry name" value="Beta Polymerase, domain 2"/>
    <property type="match status" value="1"/>
</dbReference>
<dbReference type="Gene3D" id="1.10.1410.30">
    <property type="entry name" value="CCA tRNA nucleotidyltransferase, domain 2"/>
    <property type="match status" value="1"/>
</dbReference>
<dbReference type="Gene3D" id="3.30.70.590">
    <property type="entry name" value="Poly(A) polymerase predicted RNA binding domain"/>
    <property type="match status" value="1"/>
</dbReference>
<dbReference type="HAMAP" id="MF_01264">
    <property type="entry name" value="CCA_arch"/>
    <property type="match status" value="1"/>
</dbReference>
<dbReference type="InterPro" id="IPR048833">
    <property type="entry name" value="CAA_C"/>
</dbReference>
<dbReference type="InterPro" id="IPR008229">
    <property type="entry name" value="CCA-adding_arc"/>
</dbReference>
<dbReference type="InterPro" id="IPR042090">
    <property type="entry name" value="CCA_tRNA_nucleotrans_2"/>
</dbReference>
<dbReference type="InterPro" id="IPR006116">
    <property type="entry name" value="NT_2-5OAS_ClassI-CCAase"/>
</dbReference>
<dbReference type="InterPro" id="IPR043519">
    <property type="entry name" value="NT_sf"/>
</dbReference>
<dbReference type="InterPro" id="IPR011068">
    <property type="entry name" value="NuclTrfase_I-like_C"/>
</dbReference>
<dbReference type="InterPro" id="IPR002934">
    <property type="entry name" value="Polymerase_NTP_transf_dom"/>
</dbReference>
<dbReference type="InterPro" id="IPR015329">
    <property type="entry name" value="tRNA_NucTransf2"/>
</dbReference>
<dbReference type="NCBIfam" id="TIGR03671">
    <property type="entry name" value="cca_archaeal"/>
    <property type="match status" value="1"/>
</dbReference>
<dbReference type="PANTHER" id="PTHR39643">
    <property type="entry name" value="CCA-ADDING ENZYME"/>
    <property type="match status" value="1"/>
</dbReference>
<dbReference type="PANTHER" id="PTHR39643:SF1">
    <property type="entry name" value="CCA-ADDING ENZYME"/>
    <property type="match status" value="1"/>
</dbReference>
<dbReference type="Pfam" id="PF21133">
    <property type="entry name" value="CAA_C"/>
    <property type="match status" value="1"/>
</dbReference>
<dbReference type="Pfam" id="PF01909">
    <property type="entry name" value="NTP_transf_2"/>
    <property type="match status" value="1"/>
</dbReference>
<dbReference type="Pfam" id="PF09249">
    <property type="entry name" value="tRNA_NucTransf2"/>
    <property type="match status" value="1"/>
</dbReference>
<dbReference type="PIRSF" id="PIRSF005335">
    <property type="entry name" value="CCA_arch"/>
    <property type="match status" value="1"/>
</dbReference>
<dbReference type="SUPFAM" id="SSF81301">
    <property type="entry name" value="Nucleotidyltransferase"/>
    <property type="match status" value="1"/>
</dbReference>
<dbReference type="SUPFAM" id="SSF55003">
    <property type="entry name" value="PAP/Archaeal CCA-adding enzyme, C-terminal domain"/>
    <property type="match status" value="1"/>
</dbReference>
<dbReference type="SUPFAM" id="SSF81631">
    <property type="entry name" value="PAP/OAS1 substrate-binding domain"/>
    <property type="match status" value="1"/>
</dbReference>
<evidence type="ECO:0000255" key="1">
    <source>
        <dbReference type="HAMAP-Rule" id="MF_01264"/>
    </source>
</evidence>
<protein>
    <recommendedName>
        <fullName evidence="1">CCA-adding enzyme</fullName>
        <ecNumber evidence="1">2.7.7.72</ecNumber>
    </recommendedName>
    <alternativeName>
        <fullName evidence="1">CCA tRNA nucleotidyltransferase</fullName>
    </alternativeName>
    <alternativeName>
        <fullName evidence="1">tRNA CCA-pyrophosphorylase</fullName>
    </alternativeName>
    <alternativeName>
        <fullName evidence="1">tRNA adenylyl-/cytidylyl- transferase</fullName>
    </alternativeName>
    <alternativeName>
        <fullName evidence="1">tRNA nucleotidyltransferase</fullName>
    </alternativeName>
    <alternativeName>
        <fullName evidence="1">tRNA-NT</fullName>
    </alternativeName>
</protein>
<sequence>MIEEEVLKIIKPTEEDKKGIEKVLEIIRERLNKLDFEVEGSFRKGTWLRQDTDIDVFVFYPKDVGKEYLERNALNDIINRIKDLDYTLAYAEHPYVIVNINNVEVDIVPALRVESGDKAITAVDRTPFHTKYVTSHLDERGKDEVRLLKRFMKGIGVYGAELKVQGFSGYATELLIIYYGNFRKVLEEASKWKHPIKIELTKPMKIFSEPLIIPDPVDPKRNVTAAVSLKNIATFSIAAKYYLKNPSIEFFFPSKKVEEKVKGDVLILRLNLDEKSSEDIVWGQIKRSVNKIERALKQYGFRVIDVQAWGDTNNITIAVQLESKNIGQYYLNIGPQYYSETIEDFIQKNDNIWVGEDGRLYSIKERKEYDAETIAKKNIVLKVKYNIESYWLQNTEDQQIMKFLRKTPTWLK</sequence>
<proteinExistence type="inferred from homology"/>
<keyword id="KW-0067">ATP-binding</keyword>
<keyword id="KW-0460">Magnesium</keyword>
<keyword id="KW-0479">Metal-binding</keyword>
<keyword id="KW-0547">Nucleotide-binding</keyword>
<keyword id="KW-0548">Nucleotidyltransferase</keyword>
<keyword id="KW-0692">RNA repair</keyword>
<keyword id="KW-0694">RNA-binding</keyword>
<keyword id="KW-0808">Transferase</keyword>
<keyword id="KW-0819">tRNA processing</keyword>